<organism>
    <name type="scientific">Bacillus subtilis (strain 168)</name>
    <dbReference type="NCBI Taxonomy" id="224308"/>
    <lineage>
        <taxon>Bacteria</taxon>
        <taxon>Bacillati</taxon>
        <taxon>Bacillota</taxon>
        <taxon>Bacilli</taxon>
        <taxon>Bacillales</taxon>
        <taxon>Bacillaceae</taxon>
        <taxon>Bacillus</taxon>
    </lineage>
</organism>
<accession>P37533</accession>
<name>YAAL_BACSU</name>
<dbReference type="EMBL" id="X17014">
    <property type="status" value="NOT_ANNOTATED_CDS"/>
    <property type="molecule type" value="Genomic_DNA"/>
</dbReference>
<dbReference type="EMBL" id="D26185">
    <property type="protein sequence ID" value="BAA05258.1"/>
    <property type="molecule type" value="Genomic_DNA"/>
</dbReference>
<dbReference type="EMBL" id="AL009126">
    <property type="protein sequence ID" value="CAB11798.1"/>
    <property type="molecule type" value="Genomic_DNA"/>
</dbReference>
<dbReference type="PIR" id="S13790">
    <property type="entry name" value="A41869"/>
</dbReference>
<dbReference type="RefSeq" id="NP_387903.1">
    <property type="nucleotide sequence ID" value="NC_000964.3"/>
</dbReference>
<dbReference type="RefSeq" id="WP_003242387.1">
    <property type="nucleotide sequence ID" value="NZ_OZ025638.1"/>
</dbReference>
<dbReference type="FunCoup" id="P37533">
    <property type="interactions" value="16"/>
</dbReference>
<dbReference type="STRING" id="224308.BSU00220"/>
<dbReference type="PaxDb" id="224308-BSU00220"/>
<dbReference type="EnsemblBacteria" id="CAB11798">
    <property type="protein sequence ID" value="CAB11798"/>
    <property type="gene ID" value="BSU_00220"/>
</dbReference>
<dbReference type="GeneID" id="937026"/>
<dbReference type="KEGG" id="bsu:BSU00220"/>
<dbReference type="PATRIC" id="fig|224308.179.peg.22"/>
<dbReference type="eggNOG" id="ENOG5033B6J">
    <property type="taxonomic scope" value="Bacteria"/>
</dbReference>
<dbReference type="InParanoid" id="P37533"/>
<dbReference type="OrthoDB" id="2166610at2"/>
<dbReference type="PhylomeDB" id="P37533"/>
<dbReference type="BioCyc" id="BSUB:BSU00220-MONOMER"/>
<dbReference type="Proteomes" id="UP000001570">
    <property type="component" value="Chromosome"/>
</dbReference>
<dbReference type="InterPro" id="IPR019644">
    <property type="entry name" value="DUF2508"/>
</dbReference>
<dbReference type="Pfam" id="PF10704">
    <property type="entry name" value="DUF2508"/>
    <property type="match status" value="1"/>
</dbReference>
<protein>
    <recommendedName>
        <fullName>Uncharacterized protein YaaL</fullName>
    </recommendedName>
</protein>
<sequence length="74" mass="9227">MGFLRKKTLRREFDEKLTEQLFKQKEEWNRQKKLVEKSLEPSAEVLYELKVAEAKYFFYLREAKQRNLKISRWK</sequence>
<keyword id="KW-1185">Reference proteome</keyword>
<feature type="chain" id="PRO_0000049434" description="Uncharacterized protein YaaL">
    <location>
        <begin position="1"/>
        <end position="74"/>
    </location>
</feature>
<reference key="1">
    <citation type="journal article" date="1990" name="Nucleic Acids Res.">
        <title>Molecular cloning, genetic characterization and DNA sequence analysis of the recM region of Bacillus subtilis.</title>
        <authorList>
            <person name="Alonso J.C."/>
            <person name="Shirahige K."/>
            <person name="Ogasawara N."/>
        </authorList>
    </citation>
    <scope>NUCLEOTIDE SEQUENCE [GENOMIC DNA]</scope>
    <source>
        <strain>168 / YB886 / BG214</strain>
    </source>
</reference>
<reference key="2">
    <citation type="journal article" date="1994" name="DNA Res.">
        <title>Systematic sequencing of the 180 kilobase region of the Bacillus subtilis chromosome containing the replication origin.</title>
        <authorList>
            <person name="Ogasawara N."/>
            <person name="Nakai S."/>
            <person name="Yoshikawa H."/>
        </authorList>
    </citation>
    <scope>NUCLEOTIDE SEQUENCE [GENOMIC DNA]</scope>
    <source>
        <strain>168</strain>
    </source>
</reference>
<reference key="3">
    <citation type="journal article" date="1997" name="Nature">
        <title>The complete genome sequence of the Gram-positive bacterium Bacillus subtilis.</title>
        <authorList>
            <person name="Kunst F."/>
            <person name="Ogasawara N."/>
            <person name="Moszer I."/>
            <person name="Albertini A.M."/>
            <person name="Alloni G."/>
            <person name="Azevedo V."/>
            <person name="Bertero M.G."/>
            <person name="Bessieres P."/>
            <person name="Bolotin A."/>
            <person name="Borchert S."/>
            <person name="Borriss R."/>
            <person name="Boursier L."/>
            <person name="Brans A."/>
            <person name="Braun M."/>
            <person name="Brignell S.C."/>
            <person name="Bron S."/>
            <person name="Brouillet S."/>
            <person name="Bruschi C.V."/>
            <person name="Caldwell B."/>
            <person name="Capuano V."/>
            <person name="Carter N.M."/>
            <person name="Choi S.-K."/>
            <person name="Codani J.-J."/>
            <person name="Connerton I.F."/>
            <person name="Cummings N.J."/>
            <person name="Daniel R.A."/>
            <person name="Denizot F."/>
            <person name="Devine K.M."/>
            <person name="Duesterhoeft A."/>
            <person name="Ehrlich S.D."/>
            <person name="Emmerson P.T."/>
            <person name="Entian K.-D."/>
            <person name="Errington J."/>
            <person name="Fabret C."/>
            <person name="Ferrari E."/>
            <person name="Foulger D."/>
            <person name="Fritz C."/>
            <person name="Fujita M."/>
            <person name="Fujita Y."/>
            <person name="Fuma S."/>
            <person name="Galizzi A."/>
            <person name="Galleron N."/>
            <person name="Ghim S.-Y."/>
            <person name="Glaser P."/>
            <person name="Goffeau A."/>
            <person name="Golightly E.J."/>
            <person name="Grandi G."/>
            <person name="Guiseppi G."/>
            <person name="Guy B.J."/>
            <person name="Haga K."/>
            <person name="Haiech J."/>
            <person name="Harwood C.R."/>
            <person name="Henaut A."/>
            <person name="Hilbert H."/>
            <person name="Holsappel S."/>
            <person name="Hosono S."/>
            <person name="Hullo M.-F."/>
            <person name="Itaya M."/>
            <person name="Jones L.-M."/>
            <person name="Joris B."/>
            <person name="Karamata D."/>
            <person name="Kasahara Y."/>
            <person name="Klaerr-Blanchard M."/>
            <person name="Klein C."/>
            <person name="Kobayashi Y."/>
            <person name="Koetter P."/>
            <person name="Koningstein G."/>
            <person name="Krogh S."/>
            <person name="Kumano M."/>
            <person name="Kurita K."/>
            <person name="Lapidus A."/>
            <person name="Lardinois S."/>
            <person name="Lauber J."/>
            <person name="Lazarevic V."/>
            <person name="Lee S.-M."/>
            <person name="Levine A."/>
            <person name="Liu H."/>
            <person name="Masuda S."/>
            <person name="Mauel C."/>
            <person name="Medigue C."/>
            <person name="Medina N."/>
            <person name="Mellado R.P."/>
            <person name="Mizuno M."/>
            <person name="Moestl D."/>
            <person name="Nakai S."/>
            <person name="Noback M."/>
            <person name="Noone D."/>
            <person name="O'Reilly M."/>
            <person name="Ogawa K."/>
            <person name="Ogiwara A."/>
            <person name="Oudega B."/>
            <person name="Park S.-H."/>
            <person name="Parro V."/>
            <person name="Pohl T.M."/>
            <person name="Portetelle D."/>
            <person name="Porwollik S."/>
            <person name="Prescott A.M."/>
            <person name="Presecan E."/>
            <person name="Pujic P."/>
            <person name="Purnelle B."/>
            <person name="Rapoport G."/>
            <person name="Rey M."/>
            <person name="Reynolds S."/>
            <person name="Rieger M."/>
            <person name="Rivolta C."/>
            <person name="Rocha E."/>
            <person name="Roche B."/>
            <person name="Rose M."/>
            <person name="Sadaie Y."/>
            <person name="Sato T."/>
            <person name="Scanlan E."/>
            <person name="Schleich S."/>
            <person name="Schroeter R."/>
            <person name="Scoffone F."/>
            <person name="Sekiguchi J."/>
            <person name="Sekowska A."/>
            <person name="Seror S.J."/>
            <person name="Serror P."/>
            <person name="Shin B.-S."/>
            <person name="Soldo B."/>
            <person name="Sorokin A."/>
            <person name="Tacconi E."/>
            <person name="Takagi T."/>
            <person name="Takahashi H."/>
            <person name="Takemaru K."/>
            <person name="Takeuchi M."/>
            <person name="Tamakoshi A."/>
            <person name="Tanaka T."/>
            <person name="Terpstra P."/>
            <person name="Tognoni A."/>
            <person name="Tosato V."/>
            <person name="Uchiyama S."/>
            <person name="Vandenbol M."/>
            <person name="Vannier F."/>
            <person name="Vassarotti A."/>
            <person name="Viari A."/>
            <person name="Wambutt R."/>
            <person name="Wedler E."/>
            <person name="Wedler H."/>
            <person name="Weitzenegger T."/>
            <person name="Winters P."/>
            <person name="Wipat A."/>
            <person name="Yamamoto H."/>
            <person name="Yamane K."/>
            <person name="Yasumoto K."/>
            <person name="Yata K."/>
            <person name="Yoshida K."/>
            <person name="Yoshikawa H.-F."/>
            <person name="Zumstein E."/>
            <person name="Yoshikawa H."/>
            <person name="Danchin A."/>
        </authorList>
    </citation>
    <scope>NUCLEOTIDE SEQUENCE [LARGE SCALE GENOMIC DNA]</scope>
    <source>
        <strain>168</strain>
    </source>
</reference>
<reference key="4">
    <citation type="journal article" date="1992" name="J. Bacteriol.">
        <title>Characterization of bofA, a gene involved in intercompartmental regulation of pro-sigma K processing during sporulation in Bacillus subtilis.</title>
        <authorList>
            <person name="Ricca E."/>
            <person name="Cutting S.M."/>
            <person name="Losick R."/>
        </authorList>
    </citation>
    <scope>NUCLEOTIDE SEQUENCE [GENOMIC DNA] OF 36-74</scope>
</reference>
<proteinExistence type="predicted"/>
<gene>
    <name type="primary">yaaL</name>
    <name type="ordered locus">BSU00220</name>
</gene>